<keyword id="KW-0687">Ribonucleoprotein</keyword>
<keyword id="KW-0689">Ribosomal protein</keyword>
<dbReference type="EMBL" id="CP000117">
    <property type="protein sequence ID" value="ABA23953.1"/>
    <property type="molecule type" value="Genomic_DNA"/>
</dbReference>
<dbReference type="SMR" id="Q3M4Y3"/>
<dbReference type="STRING" id="240292.Ava_4355"/>
<dbReference type="KEGG" id="ava:Ava_4355"/>
<dbReference type="eggNOG" id="COG0828">
    <property type="taxonomic scope" value="Bacteria"/>
</dbReference>
<dbReference type="HOGENOM" id="CLU_159258_3_1_3"/>
<dbReference type="Proteomes" id="UP000002533">
    <property type="component" value="Chromosome"/>
</dbReference>
<dbReference type="GO" id="GO:1990904">
    <property type="term" value="C:ribonucleoprotein complex"/>
    <property type="evidence" value="ECO:0007669"/>
    <property type="project" value="UniProtKB-KW"/>
</dbReference>
<dbReference type="GO" id="GO:0005840">
    <property type="term" value="C:ribosome"/>
    <property type="evidence" value="ECO:0007669"/>
    <property type="project" value="UniProtKB-KW"/>
</dbReference>
<dbReference type="GO" id="GO:0003735">
    <property type="term" value="F:structural constituent of ribosome"/>
    <property type="evidence" value="ECO:0007669"/>
    <property type="project" value="InterPro"/>
</dbReference>
<dbReference type="GO" id="GO:0006412">
    <property type="term" value="P:translation"/>
    <property type="evidence" value="ECO:0007669"/>
    <property type="project" value="UniProtKB-UniRule"/>
</dbReference>
<dbReference type="Gene3D" id="1.20.5.1150">
    <property type="entry name" value="Ribosomal protein S8"/>
    <property type="match status" value="1"/>
</dbReference>
<dbReference type="HAMAP" id="MF_00358">
    <property type="entry name" value="Ribosomal_bS21"/>
    <property type="match status" value="1"/>
</dbReference>
<dbReference type="InterPro" id="IPR001911">
    <property type="entry name" value="Ribosomal_bS21"/>
</dbReference>
<dbReference type="InterPro" id="IPR018278">
    <property type="entry name" value="Ribosomal_bS21_CS"/>
</dbReference>
<dbReference type="InterPro" id="IPR038380">
    <property type="entry name" value="Ribosomal_bS21_sf"/>
</dbReference>
<dbReference type="NCBIfam" id="TIGR00030">
    <property type="entry name" value="S21p"/>
    <property type="match status" value="1"/>
</dbReference>
<dbReference type="PANTHER" id="PTHR21109">
    <property type="entry name" value="MITOCHONDRIAL 28S RIBOSOMAL PROTEIN S21"/>
    <property type="match status" value="1"/>
</dbReference>
<dbReference type="PANTHER" id="PTHR21109:SF22">
    <property type="entry name" value="SMALL RIBOSOMAL SUBUNIT PROTEIN BS21"/>
    <property type="match status" value="1"/>
</dbReference>
<dbReference type="Pfam" id="PF01165">
    <property type="entry name" value="Ribosomal_S21"/>
    <property type="match status" value="1"/>
</dbReference>
<dbReference type="PRINTS" id="PR00976">
    <property type="entry name" value="RIBOSOMALS21"/>
</dbReference>
<dbReference type="PROSITE" id="PS01181">
    <property type="entry name" value="RIBOSOMAL_S21"/>
    <property type="match status" value="1"/>
</dbReference>
<sequence length="58" mass="6797">MAEVRLGENESIDSAIRRFKKKIQKAGILSEVKRRERYEKPSLRRKRKAEAARKGGRN</sequence>
<organism>
    <name type="scientific">Trichormus variabilis (strain ATCC 29413 / PCC 7937)</name>
    <name type="common">Anabaena variabilis</name>
    <dbReference type="NCBI Taxonomy" id="240292"/>
    <lineage>
        <taxon>Bacteria</taxon>
        <taxon>Bacillati</taxon>
        <taxon>Cyanobacteriota</taxon>
        <taxon>Cyanophyceae</taxon>
        <taxon>Nostocales</taxon>
        <taxon>Nostocaceae</taxon>
        <taxon>Trichormus</taxon>
    </lineage>
</organism>
<feature type="chain" id="PRO_0000266621" description="Small ribosomal subunit protein bS21A">
    <location>
        <begin position="1"/>
        <end position="58"/>
    </location>
</feature>
<feature type="region of interest" description="Disordered" evidence="2">
    <location>
        <begin position="38"/>
        <end position="58"/>
    </location>
</feature>
<feature type="compositionally biased region" description="Basic and acidic residues" evidence="2">
    <location>
        <begin position="49"/>
        <end position="58"/>
    </location>
</feature>
<reference key="1">
    <citation type="journal article" date="2014" name="Stand. Genomic Sci.">
        <title>Complete genome sequence of Anabaena variabilis ATCC 29413.</title>
        <authorList>
            <person name="Thiel T."/>
            <person name="Pratte B.S."/>
            <person name="Zhong J."/>
            <person name="Goodwin L."/>
            <person name="Copeland A."/>
            <person name="Lucas S."/>
            <person name="Han C."/>
            <person name="Pitluck S."/>
            <person name="Land M.L."/>
            <person name="Kyrpides N.C."/>
            <person name="Woyke T."/>
        </authorList>
    </citation>
    <scope>NUCLEOTIDE SEQUENCE [LARGE SCALE GENOMIC DNA]</scope>
    <source>
        <strain>ATCC 29413 / PCC 7937</strain>
    </source>
</reference>
<proteinExistence type="inferred from homology"/>
<gene>
    <name evidence="1" type="primary">rpsU1</name>
    <name evidence="1" type="synonym">rps21-1</name>
    <name type="ordered locus">Ava_4355</name>
</gene>
<protein>
    <recommendedName>
        <fullName evidence="1">Small ribosomal subunit protein bS21A</fullName>
    </recommendedName>
    <alternativeName>
        <fullName evidence="3">30S ribosomal protein S21 1</fullName>
    </alternativeName>
</protein>
<accession>Q3M4Y3</accession>
<name>RS211_TRIV2</name>
<evidence type="ECO:0000255" key="1">
    <source>
        <dbReference type="HAMAP-Rule" id="MF_00358"/>
    </source>
</evidence>
<evidence type="ECO:0000256" key="2">
    <source>
        <dbReference type="SAM" id="MobiDB-lite"/>
    </source>
</evidence>
<evidence type="ECO:0000305" key="3"/>
<comment type="similarity">
    <text evidence="1">Belongs to the bacterial ribosomal protein bS21 family.</text>
</comment>